<proteinExistence type="evidence at transcript level"/>
<dbReference type="EC" id="7.1.1.9"/>
<dbReference type="EMBL" id="L14769">
    <property type="protein sequence ID" value="AAA71993.1"/>
    <property type="molecule type" value="mRNA"/>
</dbReference>
<dbReference type="SMR" id="Q07434"/>
<dbReference type="UniPathway" id="UPA00705"/>
<dbReference type="GO" id="GO:0005743">
    <property type="term" value="C:mitochondrial inner membrane"/>
    <property type="evidence" value="ECO:0007669"/>
    <property type="project" value="UniProtKB-SubCell"/>
</dbReference>
<dbReference type="GO" id="GO:0045277">
    <property type="term" value="C:respiratory chain complex IV"/>
    <property type="evidence" value="ECO:0007669"/>
    <property type="project" value="InterPro"/>
</dbReference>
<dbReference type="GO" id="GO:0004129">
    <property type="term" value="F:cytochrome-c oxidase activity"/>
    <property type="evidence" value="ECO:0007669"/>
    <property type="project" value="UniProtKB-EC"/>
</dbReference>
<dbReference type="GO" id="GO:0020037">
    <property type="term" value="F:heme binding"/>
    <property type="evidence" value="ECO:0007669"/>
    <property type="project" value="InterPro"/>
</dbReference>
<dbReference type="GO" id="GO:0046872">
    <property type="term" value="F:metal ion binding"/>
    <property type="evidence" value="ECO:0007669"/>
    <property type="project" value="UniProtKB-KW"/>
</dbReference>
<dbReference type="GO" id="GO:0015990">
    <property type="term" value="P:electron transport coupled proton transport"/>
    <property type="evidence" value="ECO:0007669"/>
    <property type="project" value="TreeGrafter"/>
</dbReference>
<dbReference type="GO" id="GO:0006123">
    <property type="term" value="P:mitochondrial electron transport, cytochrome c to oxygen"/>
    <property type="evidence" value="ECO:0007669"/>
    <property type="project" value="TreeGrafter"/>
</dbReference>
<dbReference type="CDD" id="cd01663">
    <property type="entry name" value="Cyt_c_Oxidase_I"/>
    <property type="match status" value="1"/>
</dbReference>
<dbReference type="Gene3D" id="1.20.210.10">
    <property type="entry name" value="Cytochrome c oxidase-like, subunit I domain"/>
    <property type="match status" value="2"/>
</dbReference>
<dbReference type="InterPro" id="IPR023616">
    <property type="entry name" value="Cyt_c_oxase-like_su1_dom"/>
</dbReference>
<dbReference type="InterPro" id="IPR036927">
    <property type="entry name" value="Cyt_c_oxase-like_su1_sf"/>
</dbReference>
<dbReference type="InterPro" id="IPR000883">
    <property type="entry name" value="Cyt_C_Oxase_1"/>
</dbReference>
<dbReference type="InterPro" id="IPR023615">
    <property type="entry name" value="Cyt_c_Oxase_su1_BS"/>
</dbReference>
<dbReference type="InterPro" id="IPR033944">
    <property type="entry name" value="Cyt_c_oxase_su1_dom"/>
</dbReference>
<dbReference type="PANTHER" id="PTHR10422">
    <property type="entry name" value="CYTOCHROME C OXIDASE SUBUNIT 1"/>
    <property type="match status" value="1"/>
</dbReference>
<dbReference type="PANTHER" id="PTHR10422:SF18">
    <property type="entry name" value="CYTOCHROME C OXIDASE SUBUNIT 1"/>
    <property type="match status" value="1"/>
</dbReference>
<dbReference type="Pfam" id="PF00115">
    <property type="entry name" value="COX1"/>
    <property type="match status" value="1"/>
</dbReference>
<dbReference type="PRINTS" id="PR01165">
    <property type="entry name" value="CYCOXIDASEI"/>
</dbReference>
<dbReference type="SUPFAM" id="SSF81442">
    <property type="entry name" value="Cytochrome c oxidase subunit I-like"/>
    <property type="match status" value="1"/>
</dbReference>
<dbReference type="PROSITE" id="PS50855">
    <property type="entry name" value="COX1"/>
    <property type="match status" value="1"/>
</dbReference>
<dbReference type="PROSITE" id="PS00077">
    <property type="entry name" value="COX1_CUB"/>
    <property type="match status" value="1"/>
</dbReference>
<reference key="1">
    <citation type="journal article" date="1993" name="J. Biol. Chem.">
        <title>Substitutional and insertional RNA editing of the cytochrome c oxidase subunit 1 mRNA of Physarum polycephalum.</title>
        <authorList>
            <person name="Gott J.M."/>
            <person name="Visomirski L.M."/>
            <person name="Hunter J.L."/>
        </authorList>
    </citation>
    <scope>NUCLEOTIDE SEQUENCE [MRNA]</scope>
    <scope>RNA EDITING</scope>
    <source>
        <strain>M3C</strain>
    </source>
</reference>
<feature type="chain" id="PRO_0000183390" description="Cytochrome c oxidase subunit 1">
    <location>
        <begin position="1"/>
        <end position="594"/>
    </location>
</feature>
<feature type="transmembrane region" description="Helical" evidence="3">
    <location>
        <begin position="41"/>
        <end position="61"/>
    </location>
</feature>
<feature type="transmembrane region" description="Helical" evidence="3">
    <location>
        <begin position="89"/>
        <end position="109"/>
    </location>
</feature>
<feature type="transmembrane region" description="Helical" evidence="3">
    <location>
        <begin position="126"/>
        <end position="146"/>
    </location>
</feature>
<feature type="transmembrane region" description="Helical" evidence="3">
    <location>
        <begin position="171"/>
        <end position="191"/>
    </location>
</feature>
<feature type="transmembrane region" description="Helical" evidence="3">
    <location>
        <begin position="209"/>
        <end position="229"/>
    </location>
</feature>
<feature type="transmembrane region" description="Helical" evidence="3">
    <location>
        <begin position="260"/>
        <end position="280"/>
    </location>
</feature>
<feature type="transmembrane region" description="Helical" evidence="3">
    <location>
        <begin position="292"/>
        <end position="312"/>
    </location>
</feature>
<feature type="transmembrane region" description="Helical" evidence="3">
    <location>
        <begin position="333"/>
        <end position="353"/>
    </location>
</feature>
<feature type="transmembrane region" description="Helical" evidence="3">
    <location>
        <begin position="363"/>
        <end position="383"/>
    </location>
</feature>
<feature type="transmembrane region" description="Helical" evidence="3">
    <location>
        <begin position="405"/>
        <end position="425"/>
    </location>
</feature>
<feature type="transmembrane region" description="Helical" evidence="3">
    <location>
        <begin position="467"/>
        <end position="487"/>
    </location>
</feature>
<feature type="transmembrane region" description="Helical" evidence="3">
    <location>
        <begin position="508"/>
        <end position="528"/>
    </location>
</feature>
<feature type="binding site" evidence="2">
    <location>
        <position position="64"/>
    </location>
    <ligand>
        <name>Ca(2+)</name>
        <dbReference type="ChEBI" id="CHEBI:29108"/>
    </ligand>
</feature>
<feature type="binding site" evidence="2">
    <location>
        <position position="69"/>
    </location>
    <ligand>
        <name>Ca(2+)</name>
        <dbReference type="ChEBI" id="CHEBI:29108"/>
    </ligand>
</feature>
<feature type="binding site" description="axial binding residue" evidence="2">
    <location>
        <position position="87"/>
    </location>
    <ligand>
        <name>Fe(II)-heme a</name>
        <dbReference type="ChEBI" id="CHEBI:61715"/>
        <note>low-spin</note>
    </ligand>
    <ligandPart>
        <name>Fe</name>
        <dbReference type="ChEBI" id="CHEBI:18248"/>
    </ligandPart>
</feature>
<feature type="binding site" evidence="2">
    <location>
        <position position="266"/>
    </location>
    <ligand>
        <name>Cu cation</name>
        <dbReference type="ChEBI" id="CHEBI:23378"/>
        <label>B</label>
    </ligand>
</feature>
<feature type="binding site" evidence="1">
    <location>
        <position position="270"/>
    </location>
    <ligand>
        <name>O2</name>
        <dbReference type="ChEBI" id="CHEBI:15379"/>
    </ligand>
</feature>
<feature type="binding site" evidence="2">
    <location>
        <position position="315"/>
    </location>
    <ligand>
        <name>Cu cation</name>
        <dbReference type="ChEBI" id="CHEBI:23378"/>
        <label>B</label>
    </ligand>
</feature>
<feature type="binding site" evidence="2">
    <location>
        <position position="316"/>
    </location>
    <ligand>
        <name>Cu cation</name>
        <dbReference type="ChEBI" id="CHEBI:23378"/>
        <label>B</label>
    </ligand>
</feature>
<feature type="binding site" evidence="2">
    <location>
        <position position="393"/>
    </location>
    <ligand>
        <name>Mg(2+)</name>
        <dbReference type="ChEBI" id="CHEBI:18420"/>
        <note>ligand shared with subunit 2</note>
    </ligand>
</feature>
<feature type="binding site" evidence="2">
    <location>
        <position position="394"/>
    </location>
    <ligand>
        <name>Mg(2+)</name>
        <dbReference type="ChEBI" id="CHEBI:18420"/>
        <note>ligand shared with subunit 2</note>
    </ligand>
</feature>
<feature type="binding site" description="axial binding residue" evidence="2">
    <location>
        <position position="401"/>
    </location>
    <ligand>
        <name>heme a3</name>
        <dbReference type="ChEBI" id="CHEBI:83282"/>
        <note>high-spin</note>
    </ligand>
    <ligandPart>
        <name>Fe</name>
        <dbReference type="ChEBI" id="CHEBI:18248"/>
    </ligandPart>
</feature>
<feature type="binding site" description="axial binding residue" evidence="2">
    <location>
        <position position="403"/>
    </location>
    <ligand>
        <name>Fe(II)-heme a</name>
        <dbReference type="ChEBI" id="CHEBI:61715"/>
        <note>low-spin</note>
    </ligand>
    <ligandPart>
        <name>Fe</name>
        <dbReference type="ChEBI" id="CHEBI:18248"/>
    </ligandPart>
</feature>
<feature type="binding site" evidence="2">
    <location>
        <position position="494"/>
    </location>
    <ligand>
        <name>Ca(2+)</name>
        <dbReference type="ChEBI" id="CHEBI:29108"/>
    </ligand>
</feature>
<feature type="cross-link" description="1'-histidyl-3'-tyrosine (His-Tyr)" evidence="2">
    <location>
        <begin position="266"/>
        <end position="270"/>
    </location>
</feature>
<name>COX1_PHYPO</name>
<comment type="function">
    <text evidence="2">Component of the cytochrome c oxidase, the last enzyme in the mitochondrial electron transport chain which drives oxidative phosphorylation. The respiratory chain contains 3 multisubunit complexes succinate dehydrogenase (complex II, CII), ubiquinol-cytochrome c oxidoreductase (cytochrome b-c1 complex, complex III, CIII) and cytochrome c oxidase (complex IV, CIV), that cooperate to transfer electrons derived from NADH and succinate to molecular oxygen, creating an electrochemical gradient over the inner membrane that drives transmembrane transport and the ATP synthase. Cytochrome c oxidase is the component of the respiratory chain that catalyzes the reduction of oxygen to water. Electrons originating from reduced cytochrome c in the intermembrane space (IMS) are transferred via the dinuclear copper A center (CU(A)) of subunit 2 and heme A of subunit 1 to the active site in subunit 1, a binuclear center (BNC) formed by heme A3 and copper B (CU(B)). The BNC reduces molecular oxygen to 2 water molecules using 4 electrons from cytochrome c in the IMS and 4 protons from the mitochondrial matrix.</text>
</comment>
<comment type="catalytic activity">
    <reaction evidence="2">
        <text>4 Fe(II)-[cytochrome c] + O2 + 8 H(+)(in) = 4 Fe(III)-[cytochrome c] + 2 H2O + 4 H(+)(out)</text>
        <dbReference type="Rhea" id="RHEA:11436"/>
        <dbReference type="Rhea" id="RHEA-COMP:10350"/>
        <dbReference type="Rhea" id="RHEA-COMP:14399"/>
        <dbReference type="ChEBI" id="CHEBI:15377"/>
        <dbReference type="ChEBI" id="CHEBI:15378"/>
        <dbReference type="ChEBI" id="CHEBI:15379"/>
        <dbReference type="ChEBI" id="CHEBI:29033"/>
        <dbReference type="ChEBI" id="CHEBI:29034"/>
        <dbReference type="EC" id="7.1.1.9"/>
    </reaction>
    <physiologicalReaction direction="left-to-right" evidence="2">
        <dbReference type="Rhea" id="RHEA:11437"/>
    </physiologicalReaction>
</comment>
<comment type="cofactor">
    <cofactor evidence="2">
        <name>heme</name>
        <dbReference type="ChEBI" id="CHEBI:30413"/>
    </cofactor>
    <text evidence="2">Binds 2 heme A groups non-covalently per subunit.</text>
</comment>
<comment type="cofactor">
    <cofactor evidence="2">
        <name>Cu cation</name>
        <dbReference type="ChEBI" id="CHEBI:23378"/>
    </cofactor>
    <text evidence="2">Binds a copper B center.</text>
</comment>
<comment type="pathway">
    <text evidence="2">Energy metabolism; oxidative phosphorylation.</text>
</comment>
<comment type="subunit">
    <text evidence="2">Component of the cytochrome c oxidase (complex IV, CIV), a multisubunit enzyme composed of a catalytic core of 3 subunits and several supernumerary subunits. The complex exists as a monomer or a dimer and forms supercomplexes (SCs) in the inner mitochondrial membrane with ubiquinol-cytochrome c oxidoreductase (cytochrome b-c1 complex, complex III, CIII).</text>
</comment>
<comment type="subcellular location">
    <subcellularLocation>
        <location evidence="2">Mitochondrion inner membrane</location>
        <topology evidence="2">Multi-pass membrane protein</topology>
    </subcellularLocation>
</comment>
<comment type="RNA editing" locationType="Not_applicable">
    <text evidence="4">Some positions are modified by RNA editing via nucleotide insertion and conversion.</text>
</comment>
<comment type="similarity">
    <text evidence="5">Belongs to the heme-copper respiratory oxidase family.</text>
</comment>
<gene>
    <name type="primary">COX1</name>
</gene>
<sequence length="594" mass="66514">MSSIPFDQKTISLLGMKMDTSDFYTFADRWLFSTNHKYIGTLYLLFSIGAGLAGLALSVIMRMELASCGDLILNSNYQLYNTIVTAHALIMIFFFVMPALIGGFGNWFVPLLMGAPDMAFPRLNNISLWLLPSSLILLLLSSYVEIGAGTGWTVYPPLSSITGHSGPSVDLAIFSLHLAGVSSMLGAINFICTIKNMRLKGLTGERLSLFVWAVLVTVILLLLSLPVLAGAITMLLTDRNFNTSFFDATGGGDPILYQHLFWFFGHPEVYILILPGFGIVSIIIQAYANKAIFGYLGMVYAMLSIGILGFMVWAHHMYTVGLDVDTRAYFTAATMIIAVPTGIKIFSWLATLFGSYLKLRTPLLFILGFLILFTLGGLSGVVLANSGLDIAFHDTYYVVAHFHYVLSMGAVFAAFAAFYHWFSIIKSFTTYEPHEWEFVYNPFELRKKIPYRRTDFSYLETAGILHFITTFIGVNLTFFPMHLLGLAGMPRRIPDYPDAYLHFNLISSYGSFVTLVSTIMFFMFGVVFNYNLFINGFPSMFYIIKPLIKITFFRIKQIIQGNNECLNSISKELTILILHVKRLSKLSVNNWSIA</sequence>
<keyword id="KW-0106">Calcium</keyword>
<keyword id="KW-0186">Copper</keyword>
<keyword id="KW-0249">Electron transport</keyword>
<keyword id="KW-0349">Heme</keyword>
<keyword id="KW-0408">Iron</keyword>
<keyword id="KW-0460">Magnesium</keyword>
<keyword id="KW-0472">Membrane</keyword>
<keyword id="KW-0479">Metal-binding</keyword>
<keyword id="KW-0496">Mitochondrion</keyword>
<keyword id="KW-0999">Mitochondrion inner membrane</keyword>
<keyword id="KW-0679">Respiratory chain</keyword>
<keyword id="KW-0691">RNA editing</keyword>
<keyword id="KW-1278">Translocase</keyword>
<keyword id="KW-0812">Transmembrane</keyword>
<keyword id="KW-1133">Transmembrane helix</keyword>
<keyword id="KW-0813">Transport</keyword>
<protein>
    <recommendedName>
        <fullName>Cytochrome c oxidase subunit 1</fullName>
        <ecNumber>7.1.1.9</ecNumber>
    </recommendedName>
    <alternativeName>
        <fullName>Cytochrome c oxidase polypeptide I</fullName>
    </alternativeName>
</protein>
<accession>Q07434</accession>
<geneLocation type="mitochondrion"/>
<organism>
    <name type="scientific">Physarum polycephalum</name>
    <name type="common">Slime mold</name>
    <dbReference type="NCBI Taxonomy" id="5791"/>
    <lineage>
        <taxon>Eukaryota</taxon>
        <taxon>Amoebozoa</taxon>
        <taxon>Evosea</taxon>
        <taxon>Eumycetozoa</taxon>
        <taxon>Myxogastria</taxon>
        <taxon>Myxogastromycetidae</taxon>
        <taxon>Physariida</taxon>
        <taxon>Physaraceae</taxon>
        <taxon>Physarum</taxon>
    </lineage>
</organism>
<evidence type="ECO:0000250" key="1">
    <source>
        <dbReference type="UniProtKB" id="P00396"/>
    </source>
</evidence>
<evidence type="ECO:0000250" key="2">
    <source>
        <dbReference type="UniProtKB" id="P00401"/>
    </source>
</evidence>
<evidence type="ECO:0000255" key="3"/>
<evidence type="ECO:0000269" key="4">
    <source>
    </source>
</evidence>
<evidence type="ECO:0000305" key="5"/>